<name>AKH1_MAIZE</name>
<protein>
    <recommendedName>
        <fullName>Bifunctional aspartokinase/homoserine dehydrogenase 1, chloroplastic</fullName>
        <shortName>AK-HD 1</shortName>
        <shortName>AK-HSDH 1</shortName>
    </recommendedName>
    <domain>
        <recommendedName>
            <fullName>Aspartokinase</fullName>
            <ecNumber>2.7.2.4</ecNumber>
        </recommendedName>
    </domain>
    <domain>
        <recommendedName>
            <fullName>Homoserine dehydrogenase</fullName>
            <ecNumber>1.1.1.3</ecNumber>
        </recommendedName>
    </domain>
</protein>
<dbReference type="EC" id="2.7.2.4"/>
<dbReference type="EC" id="1.1.1.3"/>
<dbReference type="EMBL" id="L33912">
    <property type="protein sequence ID" value="AAA74360.1"/>
    <property type="molecule type" value="mRNA"/>
</dbReference>
<dbReference type="PIR" id="T02953">
    <property type="entry name" value="T02953"/>
</dbReference>
<dbReference type="RefSeq" id="NP_001105325.1">
    <property type="nucleotide sequence ID" value="NM_001111855.2"/>
</dbReference>
<dbReference type="SMR" id="P49079"/>
<dbReference type="FunCoup" id="P49079">
    <property type="interactions" value="553"/>
</dbReference>
<dbReference type="STRING" id="4577.P49079"/>
<dbReference type="PaxDb" id="4577-GRMZM2G365423_P01"/>
<dbReference type="GeneID" id="542249"/>
<dbReference type="KEGG" id="zma:542249"/>
<dbReference type="MaizeGDB" id="66609"/>
<dbReference type="eggNOG" id="ENOG502QQBK">
    <property type="taxonomic scope" value="Eukaryota"/>
</dbReference>
<dbReference type="InParanoid" id="P49079"/>
<dbReference type="OrthoDB" id="67851at2759"/>
<dbReference type="UniPathway" id="UPA00034">
    <property type="reaction ID" value="UER00015"/>
</dbReference>
<dbReference type="UniPathway" id="UPA00050">
    <property type="reaction ID" value="UER00063"/>
</dbReference>
<dbReference type="UniPathway" id="UPA00050">
    <property type="reaction ID" value="UER00461"/>
</dbReference>
<dbReference type="UniPathway" id="UPA00051">
    <property type="reaction ID" value="UER00462"/>
</dbReference>
<dbReference type="UniPathway" id="UPA00051">
    <property type="reaction ID" value="UER00465"/>
</dbReference>
<dbReference type="Proteomes" id="UP000007305">
    <property type="component" value="Unplaced"/>
</dbReference>
<dbReference type="ExpressionAtlas" id="P49079">
    <property type="expression patterns" value="baseline and differential"/>
</dbReference>
<dbReference type="GO" id="GO:0009507">
    <property type="term" value="C:chloroplast"/>
    <property type="evidence" value="ECO:0007669"/>
    <property type="project" value="UniProtKB-SubCell"/>
</dbReference>
<dbReference type="GO" id="GO:0004072">
    <property type="term" value="F:aspartate kinase activity"/>
    <property type="evidence" value="ECO:0007669"/>
    <property type="project" value="UniProtKB-EC"/>
</dbReference>
<dbReference type="GO" id="GO:0005524">
    <property type="term" value="F:ATP binding"/>
    <property type="evidence" value="ECO:0007669"/>
    <property type="project" value="UniProtKB-KW"/>
</dbReference>
<dbReference type="GO" id="GO:0004412">
    <property type="term" value="F:homoserine dehydrogenase activity"/>
    <property type="evidence" value="ECO:0000250"/>
    <property type="project" value="UniProtKB"/>
</dbReference>
<dbReference type="GO" id="GO:0046872">
    <property type="term" value="F:metal ion binding"/>
    <property type="evidence" value="ECO:0007669"/>
    <property type="project" value="UniProtKB-KW"/>
</dbReference>
<dbReference type="GO" id="GO:0070403">
    <property type="term" value="F:NAD+ binding"/>
    <property type="evidence" value="ECO:0000250"/>
    <property type="project" value="UniProtKB"/>
</dbReference>
<dbReference type="GO" id="GO:0050661">
    <property type="term" value="F:NADP binding"/>
    <property type="evidence" value="ECO:0007669"/>
    <property type="project" value="InterPro"/>
</dbReference>
<dbReference type="GO" id="GO:0009067">
    <property type="term" value="P:aspartate family amino acid biosynthetic process"/>
    <property type="evidence" value="ECO:0000318"/>
    <property type="project" value="GO_Central"/>
</dbReference>
<dbReference type="GO" id="GO:0009090">
    <property type="term" value="P:homoserine biosynthetic process"/>
    <property type="evidence" value="ECO:0000318"/>
    <property type="project" value="GO_Central"/>
</dbReference>
<dbReference type="GO" id="GO:0009089">
    <property type="term" value="P:lysine biosynthetic process via diaminopimelate"/>
    <property type="evidence" value="ECO:0000250"/>
    <property type="project" value="UniProtKB"/>
</dbReference>
<dbReference type="GO" id="GO:0009086">
    <property type="term" value="P:methionine biosynthetic process"/>
    <property type="evidence" value="ECO:0000250"/>
    <property type="project" value="UniProtKB"/>
</dbReference>
<dbReference type="GO" id="GO:0009088">
    <property type="term" value="P:threonine biosynthetic process"/>
    <property type="evidence" value="ECO:0000250"/>
    <property type="project" value="UniProtKB"/>
</dbReference>
<dbReference type="CDD" id="cd04257">
    <property type="entry name" value="AAK_AK-HSDH"/>
    <property type="match status" value="1"/>
</dbReference>
<dbReference type="CDD" id="cd04921">
    <property type="entry name" value="ACT_AKi-HSDH-ThrA-like_1"/>
    <property type="match status" value="1"/>
</dbReference>
<dbReference type="CDD" id="cd04922">
    <property type="entry name" value="ACT_AKi-HSDH-ThrA_2"/>
    <property type="match status" value="1"/>
</dbReference>
<dbReference type="FunFam" id="3.30.2130.10:FF:000001">
    <property type="entry name" value="Bifunctional aspartokinase/homoserine dehydrogenase"/>
    <property type="match status" value="1"/>
</dbReference>
<dbReference type="FunFam" id="3.30.360.10:FF:000006">
    <property type="entry name" value="Bifunctional aspartokinase/homoserine dehydrogenase"/>
    <property type="match status" value="1"/>
</dbReference>
<dbReference type="FunFam" id="3.40.1160.10:FF:000017">
    <property type="entry name" value="Bifunctional aspartokinase/homoserine dehydrogenase"/>
    <property type="match status" value="1"/>
</dbReference>
<dbReference type="FunFam" id="3.40.50.720:FF:000083">
    <property type="entry name" value="Bifunctional aspartokinase/homoserine dehydrogenase"/>
    <property type="match status" value="1"/>
</dbReference>
<dbReference type="Gene3D" id="3.40.1160.10">
    <property type="entry name" value="Acetylglutamate kinase-like"/>
    <property type="match status" value="1"/>
</dbReference>
<dbReference type="Gene3D" id="3.30.360.10">
    <property type="entry name" value="Dihydrodipicolinate Reductase, domain 2"/>
    <property type="match status" value="1"/>
</dbReference>
<dbReference type="Gene3D" id="3.40.50.720">
    <property type="entry name" value="NAD(P)-binding Rossmann-like Domain"/>
    <property type="match status" value="1"/>
</dbReference>
<dbReference type="Gene3D" id="3.30.2130.10">
    <property type="entry name" value="VC0802-like"/>
    <property type="match status" value="1"/>
</dbReference>
<dbReference type="InterPro" id="IPR036393">
    <property type="entry name" value="AceGlu_kinase-like_sf"/>
</dbReference>
<dbReference type="InterPro" id="IPR045865">
    <property type="entry name" value="ACT-like_dom_sf"/>
</dbReference>
<dbReference type="InterPro" id="IPR054352">
    <property type="entry name" value="ACT_Aspartokinase"/>
</dbReference>
<dbReference type="InterPro" id="IPR002912">
    <property type="entry name" value="ACT_dom"/>
</dbReference>
<dbReference type="InterPro" id="IPR041743">
    <property type="entry name" value="AK-HSDH_N"/>
</dbReference>
<dbReference type="InterPro" id="IPR001048">
    <property type="entry name" value="Asp/Glu/Uridylate_kinase"/>
</dbReference>
<dbReference type="InterPro" id="IPR005106">
    <property type="entry name" value="Asp/hSer_DH_NAD-bd"/>
</dbReference>
<dbReference type="InterPro" id="IPR001341">
    <property type="entry name" value="Asp_kinase"/>
</dbReference>
<dbReference type="InterPro" id="IPR018042">
    <property type="entry name" value="Aspartate_kinase_CS"/>
</dbReference>
<dbReference type="InterPro" id="IPR011147">
    <property type="entry name" value="Bifunc_Aspkin/hSer_DH"/>
</dbReference>
<dbReference type="InterPro" id="IPR001342">
    <property type="entry name" value="HDH_cat"/>
</dbReference>
<dbReference type="InterPro" id="IPR019811">
    <property type="entry name" value="HDH_CS"/>
</dbReference>
<dbReference type="InterPro" id="IPR036291">
    <property type="entry name" value="NAD(P)-bd_dom_sf"/>
</dbReference>
<dbReference type="NCBIfam" id="TIGR00657">
    <property type="entry name" value="asp_kinases"/>
    <property type="match status" value="1"/>
</dbReference>
<dbReference type="NCBIfam" id="NF006959">
    <property type="entry name" value="PRK09436.1"/>
    <property type="match status" value="1"/>
</dbReference>
<dbReference type="NCBIfam" id="NF007003">
    <property type="entry name" value="PRK09466.1"/>
    <property type="match status" value="1"/>
</dbReference>
<dbReference type="PANTHER" id="PTHR43070">
    <property type="match status" value="1"/>
</dbReference>
<dbReference type="PANTHER" id="PTHR43070:SF5">
    <property type="entry name" value="HOMOSERINE DEHYDROGENASE"/>
    <property type="match status" value="1"/>
</dbReference>
<dbReference type="Pfam" id="PF00696">
    <property type="entry name" value="AA_kinase"/>
    <property type="match status" value="1"/>
</dbReference>
<dbReference type="Pfam" id="PF22468">
    <property type="entry name" value="ACT_9"/>
    <property type="match status" value="2"/>
</dbReference>
<dbReference type="Pfam" id="PF00742">
    <property type="entry name" value="Homoserine_dh"/>
    <property type="match status" value="1"/>
</dbReference>
<dbReference type="Pfam" id="PF03447">
    <property type="entry name" value="NAD_binding_3"/>
    <property type="match status" value="1"/>
</dbReference>
<dbReference type="SUPFAM" id="SSF55021">
    <property type="entry name" value="ACT-like"/>
    <property type="match status" value="2"/>
</dbReference>
<dbReference type="SUPFAM" id="SSF53633">
    <property type="entry name" value="Carbamate kinase-like"/>
    <property type="match status" value="1"/>
</dbReference>
<dbReference type="SUPFAM" id="SSF55347">
    <property type="entry name" value="Glyceraldehyde-3-phosphate dehydrogenase-like, C-terminal domain"/>
    <property type="match status" value="1"/>
</dbReference>
<dbReference type="SUPFAM" id="SSF51735">
    <property type="entry name" value="NAD(P)-binding Rossmann-fold domains"/>
    <property type="match status" value="1"/>
</dbReference>
<dbReference type="PROSITE" id="PS51671">
    <property type="entry name" value="ACT"/>
    <property type="match status" value="2"/>
</dbReference>
<dbReference type="PROSITE" id="PS00324">
    <property type="entry name" value="ASPARTOKINASE"/>
    <property type="match status" value="1"/>
</dbReference>
<dbReference type="PROSITE" id="PS01042">
    <property type="entry name" value="HOMOSER_DHGENASE"/>
    <property type="match status" value="1"/>
</dbReference>
<sequence length="920" mass="100336">MRSLTVASRHPGAAFSTRRRPLLHPAAAGRDSTFQRCWRWEKTQDSSFGSSLRTSRLPRTVHGDILKNLLAPTAGAVSVEQAEAIADLPKGDMWSVHKFGGTCMGTSERIHNVADIVLRDPSERKLVVVSAMSKVTDMMYNLVNKAQSRDDSYIAVLDEVFDKHMTTAKDLLAGEDLARFLSQLHADISNLKAMLRAIYIAGHATESFSDFVVGHGELWSAQMLSYAIQKSGTPCSWMDTREVLVVNPSGANQVDPDYLESEKRLEKWFSRCPAETIIATGFIASTPENIPTTLKRDGSDFSAAIIGSLVKARQVTIWTDVDGVFSADPRKVSEAVILSTLSYQEAWEMSYFGANVLHPRTIIPVMKYNIPIVIRNIFNTSAPGTMICQQPANENGDLEACVKAFATIDKLALVNVEGTGMAGVPGTANAIFGAVKDVGANVIMISQASSEHSVCFAVPEKEVALVSAALHARFREALAAGRLSKVEVIHNCSILATVGLRMASTPGVSATLFDALAKANINVRAIAQGCSEYNITIVLKQEDCVRALRAAHSRFFLSKTTLAVGIIGPGLIGRTLLNQLKDQAAVLKENMNIDLRVMGIAGSRTMLLSDIGVDLTQWKEKLQTEAEPANLDKFVHHLSENHFFPNRVLVDCTADTSVASHYYDWLKKGIHVITPNKKANSGPLDRYLKLRTLQRASYTHYFYEATVGAGLPIISTLRGLLETGDKILRIEGIFSGTLSYIFNNFEGARTFSDVVAEAKKAGYTEPDPRDDLSGTDVARKVIILARESGLGLELSDIPVRSLVPEALKSCTSADEYMQKLPSFDEDWARERKNAEAAGEVLRYVGVVDVVSKKGQVELRAYKRDHPFAQLSGSDNIIAFTTSRYKDQPLIVRGPGAGAEVTAGGVFCDILRLSSYLGAPS</sequence>
<comment type="function">
    <text evidence="4">Bifunctional aspartate kinase and homoserine dehydrogenase that catalyzes the first and the third steps toward the synthesis of lysine, methionine and threonine from aspartate.</text>
</comment>
<comment type="catalytic activity">
    <reaction evidence="4">
        <text>L-homoserine + NADP(+) = L-aspartate 4-semialdehyde + NADPH + H(+)</text>
        <dbReference type="Rhea" id="RHEA:15761"/>
        <dbReference type="ChEBI" id="CHEBI:15378"/>
        <dbReference type="ChEBI" id="CHEBI:57476"/>
        <dbReference type="ChEBI" id="CHEBI:57783"/>
        <dbReference type="ChEBI" id="CHEBI:58349"/>
        <dbReference type="ChEBI" id="CHEBI:537519"/>
        <dbReference type="EC" id="1.1.1.3"/>
    </reaction>
    <physiologicalReaction direction="right-to-left" evidence="4">
        <dbReference type="Rhea" id="RHEA:15763"/>
    </physiologicalReaction>
</comment>
<comment type="catalytic activity">
    <reaction evidence="4">
        <text>L-homoserine + NAD(+) = L-aspartate 4-semialdehyde + NADH + H(+)</text>
        <dbReference type="Rhea" id="RHEA:15757"/>
        <dbReference type="ChEBI" id="CHEBI:15378"/>
        <dbReference type="ChEBI" id="CHEBI:57476"/>
        <dbReference type="ChEBI" id="CHEBI:57540"/>
        <dbReference type="ChEBI" id="CHEBI:57945"/>
        <dbReference type="ChEBI" id="CHEBI:537519"/>
        <dbReference type="EC" id="1.1.1.3"/>
    </reaction>
    <physiologicalReaction direction="right-to-left" evidence="4">
        <dbReference type="Rhea" id="RHEA:15759"/>
    </physiologicalReaction>
</comment>
<comment type="catalytic activity">
    <reaction evidence="4">
        <text>L-aspartate + ATP = 4-phospho-L-aspartate + ADP</text>
        <dbReference type="Rhea" id="RHEA:23776"/>
        <dbReference type="ChEBI" id="CHEBI:29991"/>
        <dbReference type="ChEBI" id="CHEBI:30616"/>
        <dbReference type="ChEBI" id="CHEBI:57535"/>
        <dbReference type="ChEBI" id="CHEBI:456216"/>
        <dbReference type="EC" id="2.7.2.4"/>
    </reaction>
    <physiologicalReaction direction="left-to-right" evidence="4">
        <dbReference type="Rhea" id="RHEA:23777"/>
    </physiologicalReaction>
</comment>
<comment type="cofactor">
    <cofactor evidence="3">
        <name>a metal cation</name>
        <dbReference type="ChEBI" id="CHEBI:25213"/>
    </cofactor>
    <text evidence="3">A sodium ion is seen in the structure; a metal ion may subtly affect the relative position of the nucleotide-binding region to influence enzyme activity, and could increase the stability of the enzyme.</text>
</comment>
<comment type="pathway">
    <text evidence="4">Amino-acid biosynthesis; L-lysine biosynthesis via DAP pathway; (S)-tetrahydrodipicolinate from L-aspartate: step 1/4.</text>
</comment>
<comment type="pathway">
    <text evidence="4">Amino-acid biosynthesis; L-methionine biosynthesis via de novo pathway; L-homoserine from L-aspartate: step 1/3.</text>
</comment>
<comment type="pathway">
    <text evidence="4">Amino-acid biosynthesis; L-methionine biosynthesis via de novo pathway; L-homoserine from L-aspartate: step 3/3.</text>
</comment>
<comment type="pathway">
    <text evidence="4">Amino-acid biosynthesis; L-threonine biosynthesis; L-threonine from L-aspartate: step 1/5.</text>
</comment>
<comment type="pathway">
    <text evidence="4">Amino-acid biosynthesis; L-threonine biosynthesis; L-threonine from L-aspartate: step 3/5.</text>
</comment>
<comment type="subunit">
    <text evidence="8">Homo- or heterodimer.</text>
</comment>
<comment type="subcellular location">
    <subcellularLocation>
        <location>Plastid</location>
        <location>Chloroplast</location>
    </subcellularLocation>
</comment>
<comment type="similarity">
    <text evidence="8">In the N-terminal section; belongs to the aspartokinase family.</text>
</comment>
<comment type="similarity">
    <text evidence="8">In the C-terminal section; belongs to the homoserine dehydrogenase family.</text>
</comment>
<accession>P49079</accession>
<keyword id="KW-0028">Amino-acid biosynthesis</keyword>
<keyword id="KW-0067">ATP-binding</keyword>
<keyword id="KW-0150">Chloroplast</keyword>
<keyword id="KW-0418">Kinase</keyword>
<keyword id="KW-0457">Lysine biosynthesis</keyword>
<keyword id="KW-0479">Metal-binding</keyword>
<keyword id="KW-0486">Methionine biosynthesis</keyword>
<keyword id="KW-0511">Multifunctional enzyme</keyword>
<keyword id="KW-0520">NAD</keyword>
<keyword id="KW-0521">NADP</keyword>
<keyword id="KW-0547">Nucleotide-binding</keyword>
<keyword id="KW-0560">Oxidoreductase</keyword>
<keyword id="KW-0934">Plastid</keyword>
<keyword id="KW-1185">Reference proteome</keyword>
<keyword id="KW-0677">Repeat</keyword>
<keyword id="KW-0915">Sodium</keyword>
<keyword id="KW-0791">Threonine biosynthesis</keyword>
<keyword id="KW-0808">Transferase</keyword>
<keyword id="KW-0809">Transit peptide</keyword>
<proteinExistence type="evidence at transcript level"/>
<evidence type="ECO:0000250" key="1">
    <source>
        <dbReference type="UniProtKB" id="F9VNG5"/>
    </source>
</evidence>
<evidence type="ECO:0000250" key="2">
    <source>
        <dbReference type="UniProtKB" id="O58802"/>
    </source>
</evidence>
<evidence type="ECO:0000250" key="3">
    <source>
        <dbReference type="UniProtKB" id="P31116"/>
    </source>
</evidence>
<evidence type="ECO:0000250" key="4">
    <source>
        <dbReference type="UniProtKB" id="Q9SA18"/>
    </source>
</evidence>
<evidence type="ECO:0000255" key="5"/>
<evidence type="ECO:0000255" key="6">
    <source>
        <dbReference type="PROSITE-ProRule" id="PRU01007"/>
    </source>
</evidence>
<evidence type="ECO:0000256" key="7">
    <source>
        <dbReference type="SAM" id="MobiDB-lite"/>
    </source>
</evidence>
<evidence type="ECO:0000305" key="8"/>
<feature type="transit peptide" description="Chloroplast" evidence="5">
    <location>
        <begin position="1"/>
        <end position="92"/>
    </location>
</feature>
<feature type="chain" id="PRO_0000002392" description="Bifunctional aspartokinase/homoserine dehydrogenase 1, chloroplastic">
    <location>
        <begin position="93"/>
        <end position="920"/>
    </location>
</feature>
<feature type="domain" description="ACT 1" evidence="6">
    <location>
        <begin position="416"/>
        <end position="491"/>
    </location>
</feature>
<feature type="domain" description="ACT 2" evidence="6">
    <location>
        <begin position="497"/>
        <end position="574"/>
    </location>
</feature>
<feature type="region of interest" description="Disordered" evidence="7">
    <location>
        <begin position="1"/>
        <end position="21"/>
    </location>
</feature>
<feature type="region of interest" description="Aspartokinase">
    <location>
        <begin position="93"/>
        <end position="341"/>
    </location>
</feature>
<feature type="region of interest" description="Interface">
    <location>
        <begin position="342"/>
        <end position="566"/>
    </location>
</feature>
<feature type="region of interest" description="Homoserine dehydrogenase">
    <location>
        <begin position="567"/>
        <end position="920"/>
    </location>
</feature>
<feature type="active site" description="Proton donor" evidence="5">
    <location>
        <position position="780"/>
    </location>
</feature>
<feature type="binding site" evidence="3">
    <location>
        <position position="572"/>
    </location>
    <ligand>
        <name>NAD(+)</name>
        <dbReference type="ChEBI" id="CHEBI:57540"/>
    </ligand>
</feature>
<feature type="binding site" evidence="1">
    <location>
        <position position="572"/>
    </location>
    <ligand>
        <name>NADP(+)</name>
        <dbReference type="ChEBI" id="CHEBI:58349"/>
    </ligand>
</feature>
<feature type="binding site" evidence="2">
    <location>
        <position position="572"/>
    </location>
    <ligand>
        <name>NADPH</name>
        <dbReference type="ChEBI" id="CHEBI:57783"/>
    </ligand>
</feature>
<feature type="binding site" evidence="3">
    <location>
        <position position="601"/>
    </location>
    <ligand>
        <name>NAD(+)</name>
        <dbReference type="ChEBI" id="CHEBI:57540"/>
    </ligand>
</feature>
<feature type="binding site" evidence="1">
    <location>
        <position position="604"/>
    </location>
    <ligand>
        <name>NADP(+)</name>
        <dbReference type="ChEBI" id="CHEBI:58349"/>
    </ligand>
</feature>
<feature type="binding site" evidence="3">
    <location>
        <position position="653"/>
    </location>
    <ligand>
        <name>NAD(+)</name>
        <dbReference type="ChEBI" id="CHEBI:57540"/>
    </ligand>
</feature>
<feature type="binding site" evidence="1">
    <location>
        <position position="653"/>
    </location>
    <ligand>
        <name>NADP(+)</name>
        <dbReference type="ChEBI" id="CHEBI:58349"/>
    </ligand>
</feature>
<feature type="binding site" evidence="2">
    <location>
        <position position="653"/>
    </location>
    <ligand>
        <name>NADPH</name>
        <dbReference type="ChEBI" id="CHEBI:57783"/>
    </ligand>
</feature>
<feature type="binding site" evidence="1">
    <location>
        <position position="677"/>
    </location>
    <ligand>
        <name>NADP(+)</name>
        <dbReference type="ChEBI" id="CHEBI:58349"/>
    </ligand>
</feature>
<feature type="binding site" evidence="2">
    <location>
        <position position="677"/>
    </location>
    <ligand>
        <name>NADPH</name>
        <dbReference type="ChEBI" id="CHEBI:57783"/>
    </ligand>
</feature>
<feature type="binding site" evidence="3">
    <location>
        <position position="704"/>
    </location>
    <ligand>
        <name>Na(+)</name>
        <dbReference type="ChEBI" id="CHEBI:29101"/>
    </ligand>
</feature>
<feature type="binding site" evidence="3">
    <location>
        <position position="707"/>
    </location>
    <ligand>
        <name>Na(+)</name>
        <dbReference type="ChEBI" id="CHEBI:29101"/>
    </ligand>
</feature>
<feature type="binding site" evidence="3">
    <location>
        <position position="709"/>
    </location>
    <ligand>
        <name>Na(+)</name>
        <dbReference type="ChEBI" id="CHEBI:29101"/>
    </ligand>
</feature>
<feature type="binding site" evidence="3">
    <location>
        <position position="711"/>
    </location>
    <ligand>
        <name>Na(+)</name>
        <dbReference type="ChEBI" id="CHEBI:29101"/>
    </ligand>
</feature>
<feature type="binding site" evidence="1">
    <location>
        <position position="762"/>
    </location>
    <ligand>
        <name>NADP(+)</name>
        <dbReference type="ChEBI" id="CHEBI:58349"/>
    </ligand>
</feature>
<feature type="binding site" evidence="3">
    <location>
        <position position="765"/>
    </location>
    <ligand>
        <name>L-homoserine</name>
        <dbReference type="ChEBI" id="CHEBI:57476"/>
    </ligand>
</feature>
<feature type="binding site" evidence="1">
    <location>
        <position position="765"/>
    </location>
    <ligand>
        <name>NADP(+)</name>
        <dbReference type="ChEBI" id="CHEBI:58349"/>
    </ligand>
</feature>
<feature type="binding site" evidence="3">
    <location>
        <position position="776"/>
    </location>
    <ligand>
        <name>L-homoserine</name>
        <dbReference type="ChEBI" id="CHEBI:57476"/>
    </ligand>
</feature>
<feature type="binding site" evidence="3">
    <location>
        <position position="897"/>
    </location>
    <ligand>
        <name>NAD(+)</name>
        <dbReference type="ChEBI" id="CHEBI:57540"/>
    </ligand>
</feature>
<feature type="binding site" evidence="1">
    <location>
        <position position="897"/>
    </location>
    <ligand>
        <name>NADP(+)</name>
        <dbReference type="ChEBI" id="CHEBI:58349"/>
    </ligand>
</feature>
<feature type="binding site" evidence="2">
    <location>
        <position position="897"/>
    </location>
    <ligand>
        <name>NADPH</name>
        <dbReference type="ChEBI" id="CHEBI:57783"/>
    </ligand>
</feature>
<reference key="1">
    <citation type="journal article" date="1994" name="Plant Physiol.">
        <title>Molecular genetics of the maize (Zea mays L.) aspartate kinase-homoserine dehydrogenase gene family.</title>
        <authorList>
            <person name="Muehlbauer G.J."/>
            <person name="Somers D.A."/>
            <person name="Matthews B.F."/>
            <person name="Gengenbach B.G."/>
        </authorList>
    </citation>
    <scope>NUCLEOTIDE SEQUENCE [MRNA]</scope>
    <source>
        <tissue>Seedling leaf</tissue>
    </source>
</reference>
<gene>
    <name type="primary">AKHSDH1</name>
</gene>
<organism>
    <name type="scientific">Zea mays</name>
    <name type="common">Maize</name>
    <dbReference type="NCBI Taxonomy" id="4577"/>
    <lineage>
        <taxon>Eukaryota</taxon>
        <taxon>Viridiplantae</taxon>
        <taxon>Streptophyta</taxon>
        <taxon>Embryophyta</taxon>
        <taxon>Tracheophyta</taxon>
        <taxon>Spermatophyta</taxon>
        <taxon>Magnoliopsida</taxon>
        <taxon>Liliopsida</taxon>
        <taxon>Poales</taxon>
        <taxon>Poaceae</taxon>
        <taxon>PACMAD clade</taxon>
        <taxon>Panicoideae</taxon>
        <taxon>Andropogonodae</taxon>
        <taxon>Andropogoneae</taxon>
        <taxon>Tripsacinae</taxon>
        <taxon>Zea</taxon>
    </lineage>
</organism>